<organism>
    <name type="scientific">Photorhabdus laumondii subsp. laumondii (strain DSM 15139 / CIP 105565 / TT01)</name>
    <name type="common">Photorhabdus luminescens subsp. laumondii</name>
    <dbReference type="NCBI Taxonomy" id="243265"/>
    <lineage>
        <taxon>Bacteria</taxon>
        <taxon>Pseudomonadati</taxon>
        <taxon>Pseudomonadota</taxon>
        <taxon>Gammaproteobacteria</taxon>
        <taxon>Enterobacterales</taxon>
        <taxon>Morganellaceae</taxon>
        <taxon>Photorhabdus</taxon>
    </lineage>
</organism>
<keyword id="KW-0067">ATP-binding</keyword>
<keyword id="KW-0378">Hydrolase</keyword>
<keyword id="KW-0547">Nucleotide-binding</keyword>
<keyword id="KW-1185">Reference proteome</keyword>
<name>PXPA_PHOLL</name>
<feature type="chain" id="PRO_0000185023" description="5-oxoprolinase subunit A">
    <location>
        <begin position="1"/>
        <end position="252"/>
    </location>
</feature>
<dbReference type="EC" id="3.5.2.9" evidence="1"/>
<dbReference type="EMBL" id="BX571873">
    <property type="protein sequence ID" value="CAE16676.1"/>
    <property type="status" value="ALT_INIT"/>
    <property type="molecule type" value="Genomic_DNA"/>
</dbReference>
<dbReference type="RefSeq" id="WP_041380395.1">
    <property type="nucleotide sequence ID" value="NC_005126.1"/>
</dbReference>
<dbReference type="SMR" id="Q7MZI3"/>
<dbReference type="STRING" id="243265.plu4304"/>
<dbReference type="GeneID" id="48850515"/>
<dbReference type="KEGG" id="plu:plu4304"/>
<dbReference type="eggNOG" id="COG1540">
    <property type="taxonomic scope" value="Bacteria"/>
</dbReference>
<dbReference type="HOGENOM" id="CLU_069535_0_0_6"/>
<dbReference type="OrthoDB" id="9773478at2"/>
<dbReference type="Proteomes" id="UP000002514">
    <property type="component" value="Chromosome"/>
</dbReference>
<dbReference type="GO" id="GO:0017168">
    <property type="term" value="F:5-oxoprolinase (ATP-hydrolyzing) activity"/>
    <property type="evidence" value="ECO:0007669"/>
    <property type="project" value="UniProtKB-UniRule"/>
</dbReference>
<dbReference type="GO" id="GO:0005524">
    <property type="term" value="F:ATP binding"/>
    <property type="evidence" value="ECO:0007669"/>
    <property type="project" value="UniProtKB-UniRule"/>
</dbReference>
<dbReference type="GO" id="GO:0005975">
    <property type="term" value="P:carbohydrate metabolic process"/>
    <property type="evidence" value="ECO:0007669"/>
    <property type="project" value="InterPro"/>
</dbReference>
<dbReference type="CDD" id="cd10787">
    <property type="entry name" value="LamB_YcsF_like"/>
    <property type="match status" value="1"/>
</dbReference>
<dbReference type="Gene3D" id="3.20.20.370">
    <property type="entry name" value="Glycoside hydrolase/deacetylase"/>
    <property type="match status" value="1"/>
</dbReference>
<dbReference type="HAMAP" id="MF_00691">
    <property type="entry name" value="PxpA"/>
    <property type="match status" value="1"/>
</dbReference>
<dbReference type="InterPro" id="IPR011330">
    <property type="entry name" value="Glyco_hydro/deAcase_b/a-brl"/>
</dbReference>
<dbReference type="InterPro" id="IPR005501">
    <property type="entry name" value="LamB/YcsF/PxpA-like"/>
</dbReference>
<dbReference type="NCBIfam" id="NF003814">
    <property type="entry name" value="PRK05406.1-3"/>
    <property type="match status" value="1"/>
</dbReference>
<dbReference type="NCBIfam" id="NF003816">
    <property type="entry name" value="PRK05406.1-5"/>
    <property type="match status" value="1"/>
</dbReference>
<dbReference type="PANTHER" id="PTHR30292:SF0">
    <property type="entry name" value="5-OXOPROLINASE SUBUNIT A"/>
    <property type="match status" value="1"/>
</dbReference>
<dbReference type="PANTHER" id="PTHR30292">
    <property type="entry name" value="UNCHARACTERIZED PROTEIN YBGL-RELATED"/>
    <property type="match status" value="1"/>
</dbReference>
<dbReference type="Pfam" id="PF03746">
    <property type="entry name" value="LamB_YcsF"/>
    <property type="match status" value="1"/>
</dbReference>
<dbReference type="SUPFAM" id="SSF88713">
    <property type="entry name" value="Glycoside hydrolase/deacetylase"/>
    <property type="match status" value="1"/>
</dbReference>
<gene>
    <name evidence="1" type="primary">pxpA</name>
    <name type="ordered locus">plu4304</name>
</gene>
<proteinExistence type="inferred from homology"/>
<reference key="1">
    <citation type="journal article" date="2003" name="Nat. Biotechnol.">
        <title>The genome sequence of the entomopathogenic bacterium Photorhabdus luminescens.</title>
        <authorList>
            <person name="Duchaud E."/>
            <person name="Rusniok C."/>
            <person name="Frangeul L."/>
            <person name="Buchrieser C."/>
            <person name="Givaudan A."/>
            <person name="Taourit S."/>
            <person name="Bocs S."/>
            <person name="Boursaux-Eude C."/>
            <person name="Chandler M."/>
            <person name="Charles J.-F."/>
            <person name="Dassa E."/>
            <person name="Derose R."/>
            <person name="Derzelle S."/>
            <person name="Freyssinet G."/>
            <person name="Gaudriault S."/>
            <person name="Medigue C."/>
            <person name="Lanois A."/>
            <person name="Powell K."/>
            <person name="Siguier P."/>
            <person name="Vincent R."/>
            <person name="Wingate V."/>
            <person name="Zouine M."/>
            <person name="Glaser P."/>
            <person name="Boemare N."/>
            <person name="Danchin A."/>
            <person name="Kunst F."/>
        </authorList>
    </citation>
    <scope>NUCLEOTIDE SEQUENCE [LARGE SCALE GENOMIC DNA]</scope>
    <source>
        <strain>DSM 15139 / CIP 105565 / TT01</strain>
    </source>
</reference>
<evidence type="ECO:0000255" key="1">
    <source>
        <dbReference type="HAMAP-Rule" id="MF_00691"/>
    </source>
</evidence>
<evidence type="ECO:0000305" key="2"/>
<sequence>MNMIDLNSDLGEGFGQWKMGDDNTMLSIVTSANVACGFHAGDPAGIFQTLKSAHKNQVVIGAHVSYPDLVGFGRRNMDVSSNELIADVIYQIGALKGLAVAAGTTVSYVKPHGALYNTIAHNEYQALAVITAIREVDDNLVLVGLAGSKLLDLAQENGLRTVAEAFADRAYTPQGTLVSRREKGSVLHDANLVARRMLQLVTEGGVEAIDGSFTRIQADSICVHGDSPDAVEMARQVKLTLQQAGITVRSFI</sequence>
<accession>Q7MZI3</accession>
<comment type="function">
    <text evidence="1">Catalyzes the cleavage of 5-oxoproline to form L-glutamate coupled to the hydrolysis of ATP to ADP and inorganic phosphate.</text>
</comment>
<comment type="catalytic activity">
    <reaction evidence="1">
        <text>5-oxo-L-proline + ATP + 2 H2O = L-glutamate + ADP + phosphate + H(+)</text>
        <dbReference type="Rhea" id="RHEA:10348"/>
        <dbReference type="ChEBI" id="CHEBI:15377"/>
        <dbReference type="ChEBI" id="CHEBI:15378"/>
        <dbReference type="ChEBI" id="CHEBI:29985"/>
        <dbReference type="ChEBI" id="CHEBI:30616"/>
        <dbReference type="ChEBI" id="CHEBI:43474"/>
        <dbReference type="ChEBI" id="CHEBI:58402"/>
        <dbReference type="ChEBI" id="CHEBI:456216"/>
        <dbReference type="EC" id="3.5.2.9"/>
    </reaction>
</comment>
<comment type="subunit">
    <text evidence="1">Forms a complex composed of PxpA, PxpB and PxpC.</text>
</comment>
<comment type="similarity">
    <text evidence="1">Belongs to the LamB/PxpA family.</text>
</comment>
<comment type="sequence caution" evidence="2">
    <conflict type="erroneous initiation">
        <sequence resource="EMBL-CDS" id="CAE16676"/>
    </conflict>
</comment>
<protein>
    <recommendedName>
        <fullName evidence="1">5-oxoprolinase subunit A</fullName>
        <shortName evidence="1">5-OPase subunit A</shortName>
        <ecNumber evidence="1">3.5.2.9</ecNumber>
    </recommendedName>
    <alternativeName>
        <fullName evidence="1">5-oxoprolinase (ATP-hydrolyzing) subunit A</fullName>
    </alternativeName>
</protein>